<feature type="chain" id="PRO_0000152518" description="tRNA pseudouridine synthase D">
    <location>
        <begin position="1"/>
        <end position="349"/>
    </location>
</feature>
<feature type="domain" description="TRUD" evidence="1">
    <location>
        <begin position="155"/>
        <end position="303"/>
    </location>
</feature>
<feature type="active site" description="Nucleophile" evidence="1">
    <location>
        <position position="80"/>
    </location>
</feature>
<feature type="binding site" evidence="1">
    <location>
        <position position="27"/>
    </location>
    <ligand>
        <name>substrate</name>
    </ligand>
</feature>
<feature type="binding site" evidence="1">
    <location>
        <position position="129"/>
    </location>
    <ligand>
        <name>substrate</name>
    </ligand>
</feature>
<feature type="binding site" evidence="1">
    <location>
        <position position="329"/>
    </location>
    <ligand>
        <name>substrate</name>
    </ligand>
</feature>
<organism>
    <name type="scientific">Salmonella paratyphi A (strain ATCC 9150 / SARB42)</name>
    <dbReference type="NCBI Taxonomy" id="295319"/>
    <lineage>
        <taxon>Bacteria</taxon>
        <taxon>Pseudomonadati</taxon>
        <taxon>Pseudomonadota</taxon>
        <taxon>Gammaproteobacteria</taxon>
        <taxon>Enterobacterales</taxon>
        <taxon>Enterobacteriaceae</taxon>
        <taxon>Salmonella</taxon>
    </lineage>
</organism>
<proteinExistence type="inferred from homology"/>
<dbReference type="EC" id="5.4.99.27" evidence="1"/>
<dbReference type="EMBL" id="CP000026">
    <property type="protein sequence ID" value="AAV78639.1"/>
    <property type="molecule type" value="Genomic_DNA"/>
</dbReference>
<dbReference type="RefSeq" id="WP_000134246.1">
    <property type="nucleotide sequence ID" value="NC_006511.1"/>
</dbReference>
<dbReference type="SMR" id="Q5PEG3"/>
<dbReference type="KEGG" id="spt:SPA2784"/>
<dbReference type="HOGENOM" id="CLU_005281_4_0_6"/>
<dbReference type="Proteomes" id="UP000008185">
    <property type="component" value="Chromosome"/>
</dbReference>
<dbReference type="GO" id="GO:0005829">
    <property type="term" value="C:cytosol"/>
    <property type="evidence" value="ECO:0007669"/>
    <property type="project" value="TreeGrafter"/>
</dbReference>
<dbReference type="GO" id="GO:0003723">
    <property type="term" value="F:RNA binding"/>
    <property type="evidence" value="ECO:0007669"/>
    <property type="project" value="InterPro"/>
</dbReference>
<dbReference type="GO" id="GO:0160150">
    <property type="term" value="F:tRNA pseudouridine(13) synthase activity"/>
    <property type="evidence" value="ECO:0007669"/>
    <property type="project" value="UniProtKB-EC"/>
</dbReference>
<dbReference type="GO" id="GO:0031119">
    <property type="term" value="P:tRNA pseudouridine synthesis"/>
    <property type="evidence" value="ECO:0007669"/>
    <property type="project" value="UniProtKB-UniRule"/>
</dbReference>
<dbReference type="CDD" id="cd02575">
    <property type="entry name" value="PseudoU_synth_EcTruD"/>
    <property type="match status" value="1"/>
</dbReference>
<dbReference type="FunFam" id="3.30.2340.10:FF:000001">
    <property type="entry name" value="tRNA pseudouridine synthase D"/>
    <property type="match status" value="1"/>
</dbReference>
<dbReference type="FunFam" id="3.30.2350.20:FF:000001">
    <property type="entry name" value="tRNA pseudouridine synthase D"/>
    <property type="match status" value="1"/>
</dbReference>
<dbReference type="Gene3D" id="3.30.2350.20">
    <property type="entry name" value="TruD, catalytic domain"/>
    <property type="match status" value="1"/>
</dbReference>
<dbReference type="Gene3D" id="3.30.2340.10">
    <property type="entry name" value="TruD, insertion domain"/>
    <property type="match status" value="1"/>
</dbReference>
<dbReference type="HAMAP" id="MF_01082">
    <property type="entry name" value="TruD"/>
    <property type="match status" value="1"/>
</dbReference>
<dbReference type="InterPro" id="IPR020103">
    <property type="entry name" value="PsdUridine_synth_cat_dom_sf"/>
</dbReference>
<dbReference type="InterPro" id="IPR001656">
    <property type="entry name" value="PsdUridine_synth_TruD"/>
</dbReference>
<dbReference type="InterPro" id="IPR020119">
    <property type="entry name" value="PsdUridine_synth_TruD_CS"/>
</dbReference>
<dbReference type="InterPro" id="IPR011760">
    <property type="entry name" value="PsdUridine_synth_TruD_insert"/>
</dbReference>
<dbReference type="InterPro" id="IPR042214">
    <property type="entry name" value="TruD_catalytic"/>
</dbReference>
<dbReference type="InterPro" id="IPR043165">
    <property type="entry name" value="TruD_insert_sf"/>
</dbReference>
<dbReference type="InterPro" id="IPR050170">
    <property type="entry name" value="TruD_pseudoU_synthase"/>
</dbReference>
<dbReference type="NCBIfam" id="NF002155">
    <property type="entry name" value="PRK00984.1-4"/>
    <property type="match status" value="1"/>
</dbReference>
<dbReference type="NCBIfam" id="TIGR00094">
    <property type="entry name" value="tRNA_TruD_broad"/>
    <property type="match status" value="1"/>
</dbReference>
<dbReference type="PANTHER" id="PTHR47811">
    <property type="entry name" value="TRNA PSEUDOURIDINE SYNTHASE D"/>
    <property type="match status" value="1"/>
</dbReference>
<dbReference type="PANTHER" id="PTHR47811:SF1">
    <property type="entry name" value="TRNA PSEUDOURIDINE SYNTHASE D"/>
    <property type="match status" value="1"/>
</dbReference>
<dbReference type="Pfam" id="PF01142">
    <property type="entry name" value="TruD"/>
    <property type="match status" value="2"/>
</dbReference>
<dbReference type="SUPFAM" id="SSF55120">
    <property type="entry name" value="Pseudouridine synthase"/>
    <property type="match status" value="1"/>
</dbReference>
<dbReference type="PROSITE" id="PS50984">
    <property type="entry name" value="TRUD"/>
    <property type="match status" value="1"/>
</dbReference>
<dbReference type="PROSITE" id="PS01268">
    <property type="entry name" value="UPF0024"/>
    <property type="match status" value="1"/>
</dbReference>
<evidence type="ECO:0000255" key="1">
    <source>
        <dbReference type="HAMAP-Rule" id="MF_01082"/>
    </source>
</evidence>
<accession>Q5PEG3</accession>
<keyword id="KW-0413">Isomerase</keyword>
<keyword id="KW-0819">tRNA processing</keyword>
<sequence>MTEFDNLTWLHGKPQGSGLLKANPEDFVVVEDLGFTPDGEGEHILLRILKNGCNTRFVADALAKFLKIHAREVSFAGQKDKHAVTEQWLCARVPGKEMPDFSAFQLEGCKVLEYARHKRKLRLGALKGNAFTLVLREISDRRDVETRLQAIRDGGVPNYFGAQRFGIGGSNLQGALRWAQSNAPVRDRNKRSFWLSAARSALFNQIVHQRLKKPDFNQVVDGDALQLAGRGSWFVATSEELPELQRRVDEKELMITASLPGSGEWGTQRAALAFEQDAIAQETVLQSLLLREKVEASRRAMLLYPQQLSWNWWDDVTVELRFWLPAGSFATSVVRELINTMGDYAHIAE</sequence>
<comment type="function">
    <text evidence="1">Responsible for synthesis of pseudouridine from uracil-13 in transfer RNAs.</text>
</comment>
<comment type="catalytic activity">
    <reaction evidence="1">
        <text>uridine(13) in tRNA = pseudouridine(13) in tRNA</text>
        <dbReference type="Rhea" id="RHEA:42540"/>
        <dbReference type="Rhea" id="RHEA-COMP:10105"/>
        <dbReference type="Rhea" id="RHEA-COMP:10106"/>
        <dbReference type="ChEBI" id="CHEBI:65314"/>
        <dbReference type="ChEBI" id="CHEBI:65315"/>
        <dbReference type="EC" id="5.4.99.27"/>
    </reaction>
</comment>
<comment type="similarity">
    <text evidence="1">Belongs to the pseudouridine synthase TruD family.</text>
</comment>
<protein>
    <recommendedName>
        <fullName evidence="1">tRNA pseudouridine synthase D</fullName>
        <ecNumber evidence="1">5.4.99.27</ecNumber>
    </recommendedName>
    <alternativeName>
        <fullName evidence="1">tRNA pseudouridine(13) synthase</fullName>
    </alternativeName>
    <alternativeName>
        <fullName evidence="1">tRNA pseudouridylate synthase D</fullName>
    </alternativeName>
    <alternativeName>
        <fullName evidence="1">tRNA-uridine isomerase D</fullName>
    </alternativeName>
</protein>
<gene>
    <name evidence="1" type="primary">truD</name>
    <name type="ordered locus">SPA2784</name>
</gene>
<name>TRUD_SALPA</name>
<reference key="1">
    <citation type="journal article" date="2004" name="Nat. Genet.">
        <title>Comparison of genome degradation in Paratyphi A and Typhi, human-restricted serovars of Salmonella enterica that cause typhoid.</title>
        <authorList>
            <person name="McClelland M."/>
            <person name="Sanderson K.E."/>
            <person name="Clifton S.W."/>
            <person name="Latreille P."/>
            <person name="Porwollik S."/>
            <person name="Sabo A."/>
            <person name="Meyer R."/>
            <person name="Bieri T."/>
            <person name="Ozersky P."/>
            <person name="McLellan M."/>
            <person name="Harkins C.R."/>
            <person name="Wang C."/>
            <person name="Nguyen C."/>
            <person name="Berghoff A."/>
            <person name="Elliott G."/>
            <person name="Kohlberg S."/>
            <person name="Strong C."/>
            <person name="Du F."/>
            <person name="Carter J."/>
            <person name="Kremizki C."/>
            <person name="Layman D."/>
            <person name="Leonard S."/>
            <person name="Sun H."/>
            <person name="Fulton L."/>
            <person name="Nash W."/>
            <person name="Miner T."/>
            <person name="Minx P."/>
            <person name="Delehaunty K."/>
            <person name="Fronick C."/>
            <person name="Magrini V."/>
            <person name="Nhan M."/>
            <person name="Warren W."/>
            <person name="Florea L."/>
            <person name="Spieth J."/>
            <person name="Wilson R.K."/>
        </authorList>
    </citation>
    <scope>NUCLEOTIDE SEQUENCE [LARGE SCALE GENOMIC DNA]</scope>
    <source>
        <strain>ATCC 9150 / SARB42</strain>
    </source>
</reference>